<feature type="signal peptide" evidence="2">
    <location>
        <begin position="1"/>
        <end position="20"/>
    </location>
</feature>
<feature type="chain" id="PRO_0000389147" description="GPI mannosyltransferase 2 subunit C167.09">
    <location>
        <begin position="21"/>
        <end position="178"/>
    </location>
</feature>
<feature type="topological domain" description="Lumenal" evidence="1">
    <location>
        <begin position="21"/>
        <end position="152"/>
    </location>
</feature>
<feature type="transmembrane region" description="Helical" evidence="2">
    <location>
        <begin position="153"/>
        <end position="173"/>
    </location>
</feature>
<feature type="topological domain" description="Cytoplasmic" evidence="1">
    <location>
        <begin position="174"/>
        <end position="178"/>
    </location>
</feature>
<feature type="glycosylation site" description="N-linked (GlcNAc...) asparagine" evidence="2">
    <location>
        <position position="48"/>
    </location>
</feature>
<feature type="glycosylation site" description="N-linked (GlcNAc...) asparagine" evidence="2">
    <location>
        <position position="49"/>
    </location>
</feature>
<feature type="glycosylation site" description="N-linked (GlcNAc...) asparagine" evidence="2">
    <location>
        <position position="106"/>
    </location>
</feature>
<feature type="glycosylation site" description="N-linked (GlcNAc...) asparagine" evidence="2">
    <location>
        <position position="115"/>
    </location>
</feature>
<feature type="glycosylation site" description="N-linked (GlcNAc...) asparagine" evidence="2">
    <location>
        <position position="122"/>
    </location>
</feature>
<dbReference type="EMBL" id="CU329670">
    <property type="protein sequence ID" value="CBA11495.2"/>
    <property type="molecule type" value="Genomic_DNA"/>
</dbReference>
<dbReference type="RefSeq" id="XP_002742504.2">
    <property type="nucleotide sequence ID" value="XM_002742458.2"/>
</dbReference>
<dbReference type="FunCoup" id="C6Y4B3">
    <property type="interactions" value="2"/>
</dbReference>
<dbReference type="STRING" id="284812.C6Y4B3"/>
<dbReference type="iPTMnet" id="C6Y4B3"/>
<dbReference type="PaxDb" id="4896-SPAC167.09.1"/>
<dbReference type="EnsemblFungi" id="SPAC167.09.1">
    <property type="protein sequence ID" value="SPAC167.09.1:pep"/>
    <property type="gene ID" value="SPAC167.09"/>
</dbReference>
<dbReference type="PomBase" id="SPAC167.09"/>
<dbReference type="VEuPathDB" id="FungiDB:SPAC167.09"/>
<dbReference type="HOGENOM" id="CLU_1518719_0_0_1"/>
<dbReference type="InParanoid" id="C6Y4B3"/>
<dbReference type="OMA" id="YQLRASW"/>
<dbReference type="UniPathway" id="UPA00196"/>
<dbReference type="PRO" id="PR:C6Y4B3"/>
<dbReference type="Proteomes" id="UP000002485">
    <property type="component" value="Chromosome I"/>
</dbReference>
<dbReference type="GO" id="GO:0005789">
    <property type="term" value="C:endoplasmic reticulum membrane"/>
    <property type="evidence" value="ECO:0000318"/>
    <property type="project" value="GO_Central"/>
</dbReference>
<dbReference type="GO" id="GO:0120097">
    <property type="term" value="C:glycosylphosphatidylinositol-mannosyltransferase II complex"/>
    <property type="evidence" value="ECO:0000266"/>
    <property type="project" value="PomBase"/>
</dbReference>
<dbReference type="GO" id="GO:0031501">
    <property type="term" value="C:mannosyltransferase complex"/>
    <property type="evidence" value="ECO:0000318"/>
    <property type="project" value="GO_Central"/>
</dbReference>
<dbReference type="GO" id="GO:0030234">
    <property type="term" value="F:enzyme regulator activity"/>
    <property type="evidence" value="ECO:0000266"/>
    <property type="project" value="PomBase"/>
</dbReference>
<dbReference type="GO" id="GO:0016757">
    <property type="term" value="F:glycosyltransferase activity"/>
    <property type="evidence" value="ECO:0007669"/>
    <property type="project" value="UniProtKB-KW"/>
</dbReference>
<dbReference type="GO" id="GO:0006506">
    <property type="term" value="P:GPI anchor biosynthetic process"/>
    <property type="evidence" value="ECO:0000318"/>
    <property type="project" value="GO_Central"/>
</dbReference>
<dbReference type="InterPro" id="IPR019433">
    <property type="entry name" value="GPI_ManTrfase_II_coact_Pga1"/>
</dbReference>
<dbReference type="PANTHER" id="PTHR28022">
    <property type="entry name" value="GPI MANNOSYLTRANSFERASE 2 SUBUNIT PGA1"/>
    <property type="match status" value="1"/>
</dbReference>
<dbReference type="PANTHER" id="PTHR28022:SF1">
    <property type="entry name" value="GPI MANNOSYLTRANSFERASE 2 SUBUNIT PGA1"/>
    <property type="match status" value="1"/>
</dbReference>
<dbReference type="Pfam" id="PF10333">
    <property type="entry name" value="Pga1"/>
    <property type="match status" value="1"/>
</dbReference>
<comment type="function">
    <text evidence="1">Essential component of the GPI mannosyltransferase 2 complex. Responsible for the transfer of the second mannose to the glycosylphosphatidylinositol during GPI precursor assembly (By similarity).</text>
</comment>
<comment type="pathway">
    <text>Glycolipid biosynthesis; glycosylphosphatidylinositol-anchor biosynthesis.</text>
</comment>
<comment type="subunit">
    <text evidence="1">Part of the GPI mannosyltransferase 2 complex composed of gpi18 and C167.09.</text>
</comment>
<comment type="subcellular location">
    <subcellularLocation>
        <location evidence="1">Endoplasmic reticulum membrane</location>
        <topology evidence="1">Single-pass membrane protein</topology>
    </subcellularLocation>
</comment>
<gene>
    <name type="ORF">SPAC167.09</name>
</gene>
<proteinExistence type="evidence at transcript level"/>
<sequence length="178" mass="19995">MREFRLIFVLLFFLPSFAIANTEIINVETGDSNKLLTSNSVCDIELSNNSSIPLLLKPNPTIPQAAGAPQQSKYTFSVCGLKPLQKYQIRASWPAVYPSDIILNYNITHIIVEINASFYSHNESLMKRPPLVPLRLVVEPLLLGFLPKSVLPIVGFVFVIILIALICMTNLFIKHKRD</sequence>
<accession>C6Y4B3</accession>
<organism>
    <name type="scientific">Schizosaccharomyces pombe (strain 972 / ATCC 24843)</name>
    <name type="common">Fission yeast</name>
    <dbReference type="NCBI Taxonomy" id="284812"/>
    <lineage>
        <taxon>Eukaryota</taxon>
        <taxon>Fungi</taxon>
        <taxon>Dikarya</taxon>
        <taxon>Ascomycota</taxon>
        <taxon>Taphrinomycotina</taxon>
        <taxon>Schizosaccharomycetes</taxon>
        <taxon>Schizosaccharomycetales</taxon>
        <taxon>Schizosaccharomycetaceae</taxon>
        <taxon>Schizosaccharomyces</taxon>
    </lineage>
</organism>
<name>PGA1_SCHPO</name>
<reference key="1">
    <citation type="journal article" date="2002" name="Nature">
        <title>The genome sequence of Schizosaccharomyces pombe.</title>
        <authorList>
            <person name="Wood V."/>
            <person name="Gwilliam R."/>
            <person name="Rajandream M.A."/>
            <person name="Lyne M.H."/>
            <person name="Lyne R."/>
            <person name="Stewart A."/>
            <person name="Sgouros J.G."/>
            <person name="Peat N."/>
            <person name="Hayles J."/>
            <person name="Baker S.G."/>
            <person name="Basham D."/>
            <person name="Bowman S."/>
            <person name="Brooks K."/>
            <person name="Brown D."/>
            <person name="Brown S."/>
            <person name="Chillingworth T."/>
            <person name="Churcher C.M."/>
            <person name="Collins M."/>
            <person name="Connor R."/>
            <person name="Cronin A."/>
            <person name="Davis P."/>
            <person name="Feltwell T."/>
            <person name="Fraser A."/>
            <person name="Gentles S."/>
            <person name="Goble A."/>
            <person name="Hamlin N."/>
            <person name="Harris D.E."/>
            <person name="Hidalgo J."/>
            <person name="Hodgson G."/>
            <person name="Holroyd S."/>
            <person name="Hornsby T."/>
            <person name="Howarth S."/>
            <person name="Huckle E.J."/>
            <person name="Hunt S."/>
            <person name="Jagels K."/>
            <person name="James K.D."/>
            <person name="Jones L."/>
            <person name="Jones M."/>
            <person name="Leather S."/>
            <person name="McDonald S."/>
            <person name="McLean J."/>
            <person name="Mooney P."/>
            <person name="Moule S."/>
            <person name="Mungall K.L."/>
            <person name="Murphy L.D."/>
            <person name="Niblett D."/>
            <person name="Odell C."/>
            <person name="Oliver K."/>
            <person name="O'Neil S."/>
            <person name="Pearson D."/>
            <person name="Quail M.A."/>
            <person name="Rabbinowitsch E."/>
            <person name="Rutherford K.M."/>
            <person name="Rutter S."/>
            <person name="Saunders D."/>
            <person name="Seeger K."/>
            <person name="Sharp S."/>
            <person name="Skelton J."/>
            <person name="Simmonds M.N."/>
            <person name="Squares R."/>
            <person name="Squares S."/>
            <person name="Stevens K."/>
            <person name="Taylor K."/>
            <person name="Taylor R.G."/>
            <person name="Tivey A."/>
            <person name="Walsh S.V."/>
            <person name="Warren T."/>
            <person name="Whitehead S."/>
            <person name="Woodward J.R."/>
            <person name="Volckaert G."/>
            <person name="Aert R."/>
            <person name="Robben J."/>
            <person name="Grymonprez B."/>
            <person name="Weltjens I."/>
            <person name="Vanstreels E."/>
            <person name="Rieger M."/>
            <person name="Schaefer M."/>
            <person name="Mueller-Auer S."/>
            <person name="Gabel C."/>
            <person name="Fuchs M."/>
            <person name="Duesterhoeft A."/>
            <person name="Fritzc C."/>
            <person name="Holzer E."/>
            <person name="Moestl D."/>
            <person name="Hilbert H."/>
            <person name="Borzym K."/>
            <person name="Langer I."/>
            <person name="Beck A."/>
            <person name="Lehrach H."/>
            <person name="Reinhardt R."/>
            <person name="Pohl T.M."/>
            <person name="Eger P."/>
            <person name="Zimmermann W."/>
            <person name="Wedler H."/>
            <person name="Wambutt R."/>
            <person name="Purnelle B."/>
            <person name="Goffeau A."/>
            <person name="Cadieu E."/>
            <person name="Dreano S."/>
            <person name="Gloux S."/>
            <person name="Lelaure V."/>
            <person name="Mottier S."/>
            <person name="Galibert F."/>
            <person name="Aves S.J."/>
            <person name="Xiang Z."/>
            <person name="Hunt C."/>
            <person name="Moore K."/>
            <person name="Hurst S.M."/>
            <person name="Lucas M."/>
            <person name="Rochet M."/>
            <person name="Gaillardin C."/>
            <person name="Tallada V.A."/>
            <person name="Garzon A."/>
            <person name="Thode G."/>
            <person name="Daga R.R."/>
            <person name="Cruzado L."/>
            <person name="Jimenez J."/>
            <person name="Sanchez M."/>
            <person name="del Rey F."/>
            <person name="Benito J."/>
            <person name="Dominguez A."/>
            <person name="Revuelta J.L."/>
            <person name="Moreno S."/>
            <person name="Armstrong J."/>
            <person name="Forsburg S.L."/>
            <person name="Cerutti L."/>
            <person name="Lowe T."/>
            <person name="McCombie W.R."/>
            <person name="Paulsen I."/>
            <person name="Potashkin J."/>
            <person name="Shpakovski G.V."/>
            <person name="Ussery D."/>
            <person name="Barrell B.G."/>
            <person name="Nurse P."/>
        </authorList>
    </citation>
    <scope>NUCLEOTIDE SEQUENCE [LARGE SCALE GENOMIC DNA]</scope>
    <source>
        <strain>972 / ATCC 24843</strain>
    </source>
</reference>
<reference key="2">
    <citation type="journal article" date="2011" name="Science">
        <title>Comparative functional genomics of the fission yeasts.</title>
        <authorList>
            <person name="Rhind N."/>
            <person name="Chen Z."/>
            <person name="Yassour M."/>
            <person name="Thompson D.A."/>
            <person name="Haas B.J."/>
            <person name="Habib N."/>
            <person name="Wapinski I."/>
            <person name="Roy S."/>
            <person name="Lin M.F."/>
            <person name="Heiman D.I."/>
            <person name="Young S.K."/>
            <person name="Furuya K."/>
            <person name="Guo Y."/>
            <person name="Pidoux A."/>
            <person name="Chen H.M."/>
            <person name="Robbertse B."/>
            <person name="Goldberg J.M."/>
            <person name="Aoki K."/>
            <person name="Bayne E.H."/>
            <person name="Berlin A.M."/>
            <person name="Desjardins C.A."/>
            <person name="Dobbs E."/>
            <person name="Dukaj L."/>
            <person name="Fan L."/>
            <person name="FitzGerald M.G."/>
            <person name="French C."/>
            <person name="Gujja S."/>
            <person name="Hansen K."/>
            <person name="Keifenheim D."/>
            <person name="Levin J.Z."/>
            <person name="Mosher R.A."/>
            <person name="Mueller C.A."/>
            <person name="Pfiffner J."/>
            <person name="Priest M."/>
            <person name="Russ C."/>
            <person name="Smialowska A."/>
            <person name="Swoboda P."/>
            <person name="Sykes S.M."/>
            <person name="Vaughn M."/>
            <person name="Vengrova S."/>
            <person name="Yoder R."/>
            <person name="Zeng Q."/>
            <person name="Allshire R."/>
            <person name="Baulcombe D."/>
            <person name="Birren B.W."/>
            <person name="Brown W."/>
            <person name="Ekwall K."/>
            <person name="Kellis M."/>
            <person name="Leatherwood J."/>
            <person name="Levin H."/>
            <person name="Margalit H."/>
            <person name="Martienssen R."/>
            <person name="Nieduszynski C.A."/>
            <person name="Spatafora J.W."/>
            <person name="Friedman N."/>
            <person name="Dalgaard J.Z."/>
            <person name="Baumann P."/>
            <person name="Niki H."/>
            <person name="Regev A."/>
            <person name="Nusbaum C."/>
        </authorList>
    </citation>
    <scope>REVISION OF GENE MODEL</scope>
</reference>
<reference key="3">
    <citation type="journal article" date="2008" name="Nature">
        <title>Dynamic repertoire of a eukaryotic transcriptome surveyed at single-nucleotide resolution.</title>
        <authorList>
            <person name="Wilhelm B.T."/>
            <person name="Marguerat S."/>
            <person name="Watt S."/>
            <person name="Schubert F."/>
            <person name="Wood V."/>
            <person name="Goodhead I."/>
            <person name="Penkett C.J."/>
            <person name="Rogers J."/>
            <person name="Baehler J."/>
        </authorList>
    </citation>
    <scope>IDENTIFICATION</scope>
</reference>
<keyword id="KW-0256">Endoplasmic reticulum</keyword>
<keyword id="KW-0325">Glycoprotein</keyword>
<keyword id="KW-0328">Glycosyltransferase</keyword>
<keyword id="KW-0337">GPI-anchor biosynthesis</keyword>
<keyword id="KW-0472">Membrane</keyword>
<keyword id="KW-1185">Reference proteome</keyword>
<keyword id="KW-0732">Signal</keyword>
<keyword id="KW-0808">Transferase</keyword>
<keyword id="KW-0812">Transmembrane</keyword>
<keyword id="KW-1133">Transmembrane helix</keyword>
<evidence type="ECO:0000250" key="1"/>
<evidence type="ECO:0000255" key="2"/>
<protein>
    <recommendedName>
        <fullName>GPI mannosyltransferase 2 subunit C167.09</fullName>
    </recommendedName>
</protein>